<dbReference type="EC" id="7.1.1.-" evidence="1"/>
<dbReference type="EMBL" id="AE006470">
    <property type="protein sequence ID" value="AAM72007.1"/>
    <property type="molecule type" value="Genomic_DNA"/>
</dbReference>
<dbReference type="RefSeq" id="NP_661665.1">
    <property type="nucleotide sequence ID" value="NC_002932.3"/>
</dbReference>
<dbReference type="RefSeq" id="WP_010932452.1">
    <property type="nucleotide sequence ID" value="NC_002932.3"/>
</dbReference>
<dbReference type="SMR" id="Q8KEB9"/>
<dbReference type="STRING" id="194439.CT0770"/>
<dbReference type="EnsemblBacteria" id="AAM72007">
    <property type="protein sequence ID" value="AAM72007"/>
    <property type="gene ID" value="CT0770"/>
</dbReference>
<dbReference type="KEGG" id="cte:CT0770"/>
<dbReference type="PATRIC" id="fig|194439.7.peg.701"/>
<dbReference type="eggNOG" id="COG1005">
    <property type="taxonomic scope" value="Bacteria"/>
</dbReference>
<dbReference type="HOGENOM" id="CLU_015134_0_1_10"/>
<dbReference type="OrthoDB" id="9803734at2"/>
<dbReference type="Proteomes" id="UP000001007">
    <property type="component" value="Chromosome"/>
</dbReference>
<dbReference type="GO" id="GO:0005886">
    <property type="term" value="C:plasma membrane"/>
    <property type="evidence" value="ECO:0007669"/>
    <property type="project" value="UniProtKB-SubCell"/>
</dbReference>
<dbReference type="GO" id="GO:0003954">
    <property type="term" value="F:NADH dehydrogenase activity"/>
    <property type="evidence" value="ECO:0007669"/>
    <property type="project" value="TreeGrafter"/>
</dbReference>
<dbReference type="GO" id="GO:0016655">
    <property type="term" value="F:oxidoreductase activity, acting on NAD(P)H, quinone or similar compound as acceptor"/>
    <property type="evidence" value="ECO:0007669"/>
    <property type="project" value="UniProtKB-UniRule"/>
</dbReference>
<dbReference type="GO" id="GO:0048038">
    <property type="term" value="F:quinone binding"/>
    <property type="evidence" value="ECO:0007669"/>
    <property type="project" value="UniProtKB-KW"/>
</dbReference>
<dbReference type="GO" id="GO:0009060">
    <property type="term" value="P:aerobic respiration"/>
    <property type="evidence" value="ECO:0007669"/>
    <property type="project" value="TreeGrafter"/>
</dbReference>
<dbReference type="HAMAP" id="MF_01350">
    <property type="entry name" value="NDH1_NuoH"/>
    <property type="match status" value="1"/>
</dbReference>
<dbReference type="InterPro" id="IPR001694">
    <property type="entry name" value="NADH_UbQ_OxRdtase_su1/FPO"/>
</dbReference>
<dbReference type="InterPro" id="IPR018086">
    <property type="entry name" value="NADH_UbQ_OxRdtase_su1_CS"/>
</dbReference>
<dbReference type="NCBIfam" id="NF004741">
    <property type="entry name" value="PRK06076.1-2"/>
    <property type="match status" value="1"/>
</dbReference>
<dbReference type="PANTHER" id="PTHR11432">
    <property type="entry name" value="NADH DEHYDROGENASE SUBUNIT 1"/>
    <property type="match status" value="1"/>
</dbReference>
<dbReference type="PANTHER" id="PTHR11432:SF3">
    <property type="entry name" value="NADH-UBIQUINONE OXIDOREDUCTASE CHAIN 1"/>
    <property type="match status" value="1"/>
</dbReference>
<dbReference type="Pfam" id="PF00146">
    <property type="entry name" value="NADHdh"/>
    <property type="match status" value="1"/>
</dbReference>
<dbReference type="PROSITE" id="PS00667">
    <property type="entry name" value="COMPLEX1_ND1_1"/>
    <property type="match status" value="1"/>
</dbReference>
<dbReference type="PROSITE" id="PS00668">
    <property type="entry name" value="COMPLEX1_ND1_2"/>
    <property type="match status" value="1"/>
</dbReference>
<evidence type="ECO:0000255" key="1">
    <source>
        <dbReference type="HAMAP-Rule" id="MF_01350"/>
    </source>
</evidence>
<sequence length="359" mass="39476">MSSSPSLNTWSDALSGFSIGWFPLGLVIVAAIPLVFIALYALTYGVYGERKISAFMQDRLGPMEVGFWGLLQTLADILKLLQKEDIVPTVADKFLFVIGPGILFVGSFLAFAVLPFGPAFIGADLNVGLFYAVGIVAIEVVGILAAGWGSNNKWALYGAVRSVAQIVSYEIPASIALLCAAMLAGTLSMQQIILMQAGPNGFLHWFLFTNPIAWLPFLIYFISSLAETNRAPFDIPEAESELVAGYFTEYSGMKFAVIFLAEYGSMFMVSAIISIAFLGGWTSPLPNIGGLELNTMTSGPVWGAFWIIMKGFFFIFVQMWLRWTLPRLRVDQLMYLCWKVLTPFSLVSFVLTAIWVINH</sequence>
<keyword id="KW-0997">Cell inner membrane</keyword>
<keyword id="KW-1003">Cell membrane</keyword>
<keyword id="KW-0472">Membrane</keyword>
<keyword id="KW-0520">NAD</keyword>
<keyword id="KW-0874">Quinone</keyword>
<keyword id="KW-1185">Reference proteome</keyword>
<keyword id="KW-1278">Translocase</keyword>
<keyword id="KW-0812">Transmembrane</keyword>
<keyword id="KW-1133">Transmembrane helix</keyword>
<keyword id="KW-0830">Ubiquinone</keyword>
<comment type="function">
    <text evidence="1">NDH-1 shuttles electrons from NADH, via FMN and iron-sulfur (Fe-S) centers, to quinones in the respiratory chain. The immediate electron acceptor for the enzyme in this species is believed to be ubiquinone. Couples the redox reaction to proton translocation (for every two electrons transferred, four hydrogen ions are translocated across the cytoplasmic membrane), and thus conserves the redox energy in a proton gradient. This subunit may bind ubiquinone.</text>
</comment>
<comment type="catalytic activity">
    <reaction evidence="1">
        <text>a quinone + NADH + 5 H(+)(in) = a quinol + NAD(+) + 4 H(+)(out)</text>
        <dbReference type="Rhea" id="RHEA:57888"/>
        <dbReference type="ChEBI" id="CHEBI:15378"/>
        <dbReference type="ChEBI" id="CHEBI:24646"/>
        <dbReference type="ChEBI" id="CHEBI:57540"/>
        <dbReference type="ChEBI" id="CHEBI:57945"/>
        <dbReference type="ChEBI" id="CHEBI:132124"/>
    </reaction>
</comment>
<comment type="subunit">
    <text evidence="1">NDH-1 is composed of 14 different subunits. Subunits NuoA, H, J, K, L, M, N constitute the membrane sector of the complex.</text>
</comment>
<comment type="subcellular location">
    <subcellularLocation>
        <location evidence="1">Cell inner membrane</location>
        <topology evidence="1">Multi-pass membrane protein</topology>
    </subcellularLocation>
</comment>
<comment type="similarity">
    <text evidence="1">Belongs to the complex I subunit 1 family.</text>
</comment>
<name>NUOH_CHLTE</name>
<feature type="chain" id="PRO_0000240065" description="NADH-quinone oxidoreductase subunit H">
    <location>
        <begin position="1"/>
        <end position="359"/>
    </location>
</feature>
<feature type="transmembrane region" description="Helical" evidence="1">
    <location>
        <begin position="19"/>
        <end position="39"/>
    </location>
</feature>
<feature type="transmembrane region" description="Helical" evidence="1">
    <location>
        <begin position="94"/>
        <end position="114"/>
    </location>
</feature>
<feature type="transmembrane region" description="Helical" evidence="1">
    <location>
        <begin position="127"/>
        <end position="147"/>
    </location>
</feature>
<feature type="transmembrane region" description="Helical" evidence="1">
    <location>
        <begin position="175"/>
        <end position="195"/>
    </location>
</feature>
<feature type="transmembrane region" description="Helical" evidence="1">
    <location>
        <begin position="202"/>
        <end position="222"/>
    </location>
</feature>
<feature type="transmembrane region" description="Helical" evidence="1">
    <location>
        <begin position="255"/>
        <end position="275"/>
    </location>
</feature>
<feature type="transmembrane region" description="Helical" evidence="1">
    <location>
        <begin position="301"/>
        <end position="321"/>
    </location>
</feature>
<feature type="transmembrane region" description="Helical" evidence="1">
    <location>
        <begin position="337"/>
        <end position="357"/>
    </location>
</feature>
<protein>
    <recommendedName>
        <fullName evidence="1">NADH-quinone oxidoreductase subunit H</fullName>
        <ecNumber evidence="1">7.1.1.-</ecNumber>
    </recommendedName>
    <alternativeName>
        <fullName evidence="1">NADH dehydrogenase I subunit H</fullName>
    </alternativeName>
    <alternativeName>
        <fullName evidence="1">NDH-1 subunit H</fullName>
    </alternativeName>
</protein>
<organism>
    <name type="scientific">Chlorobaculum tepidum (strain ATCC 49652 / DSM 12025 / NBRC 103806 / TLS)</name>
    <name type="common">Chlorobium tepidum</name>
    <dbReference type="NCBI Taxonomy" id="194439"/>
    <lineage>
        <taxon>Bacteria</taxon>
        <taxon>Pseudomonadati</taxon>
        <taxon>Chlorobiota</taxon>
        <taxon>Chlorobiia</taxon>
        <taxon>Chlorobiales</taxon>
        <taxon>Chlorobiaceae</taxon>
        <taxon>Chlorobaculum</taxon>
    </lineage>
</organism>
<gene>
    <name evidence="1" type="primary">nuoH</name>
    <name type="synonym">ndhA</name>
    <name type="ordered locus">CT0770</name>
</gene>
<reference key="1">
    <citation type="journal article" date="2002" name="Proc. Natl. Acad. Sci. U.S.A.">
        <title>The complete genome sequence of Chlorobium tepidum TLS, a photosynthetic, anaerobic, green-sulfur bacterium.</title>
        <authorList>
            <person name="Eisen J.A."/>
            <person name="Nelson K.E."/>
            <person name="Paulsen I.T."/>
            <person name="Heidelberg J.F."/>
            <person name="Wu M."/>
            <person name="Dodson R.J."/>
            <person name="DeBoy R.T."/>
            <person name="Gwinn M.L."/>
            <person name="Nelson W.C."/>
            <person name="Haft D.H."/>
            <person name="Hickey E.K."/>
            <person name="Peterson J.D."/>
            <person name="Durkin A.S."/>
            <person name="Kolonay J.F."/>
            <person name="Yang F."/>
            <person name="Holt I.E."/>
            <person name="Umayam L.A."/>
            <person name="Mason T.M."/>
            <person name="Brenner M."/>
            <person name="Shea T.P."/>
            <person name="Parksey D.S."/>
            <person name="Nierman W.C."/>
            <person name="Feldblyum T.V."/>
            <person name="Hansen C.L."/>
            <person name="Craven M.B."/>
            <person name="Radune D."/>
            <person name="Vamathevan J.J."/>
            <person name="Khouri H.M."/>
            <person name="White O."/>
            <person name="Gruber T.M."/>
            <person name="Ketchum K.A."/>
            <person name="Venter J.C."/>
            <person name="Tettelin H."/>
            <person name="Bryant D.A."/>
            <person name="Fraser C.M."/>
        </authorList>
    </citation>
    <scope>NUCLEOTIDE SEQUENCE [LARGE SCALE GENOMIC DNA]</scope>
    <source>
        <strain>ATCC 49652 / DSM 12025 / NBRC 103806 / TLS</strain>
    </source>
</reference>
<accession>Q8KEB9</accession>
<proteinExistence type="inferred from homology"/>